<comment type="function">
    <text evidence="1">Gas vesicles are hollow, gas filled proteinaceous nanostructures found in some microorganisms. During planktonic growth they allow positioning of the organism at a favorable depth for light or nutrient acquisition. GvpA forms the protein shell.</text>
</comment>
<comment type="subunit">
    <text evidence="1">The gas vesicle shell is 2 nm thick and consists of a single layer of this protein. It forms helical ribs nearly perpendicular to the long axis of the vesicle.</text>
</comment>
<comment type="subcellular location">
    <subcellularLocation>
        <location evidence="1">Gas vesicle shell</location>
    </subcellularLocation>
</comment>
<comment type="miscellaneous">
    <text evidence="2">Gas vesicles are about 100 nm wide and 200-400 nm long, and located close to the cell surface.</text>
</comment>
<comment type="similarity">
    <text evidence="1">Belongs to the gas vesicle GvpA family.</text>
</comment>
<reference key="1">
    <citation type="journal article" date="2006" name="BMC Genomics">
        <title>The genome of the square archaeon Haloquadratum walsbyi: life at the limits of water activity.</title>
        <authorList>
            <person name="Bolhuis H."/>
            <person name="Palm P."/>
            <person name="Wende A."/>
            <person name="Falb M."/>
            <person name="Rampp M."/>
            <person name="Rodriguez-Valera F."/>
            <person name="Pfeiffer F."/>
            <person name="Oesterhelt D."/>
        </authorList>
    </citation>
    <scope>NUCLEOTIDE SEQUENCE [LARGE SCALE GENOMIC DNA]</scope>
    <source>
        <strain>DSM 16790 / HBSQ001</strain>
    </source>
</reference>
<dbReference type="EMBL" id="AM180088">
    <property type="protein sequence ID" value="CAJ51910.1"/>
    <property type="molecule type" value="Genomic_DNA"/>
</dbReference>
<dbReference type="RefSeq" id="WP_011571057.1">
    <property type="nucleotide sequence ID" value="NC_008212.1"/>
</dbReference>
<dbReference type="SMR" id="Q18JA1"/>
<dbReference type="STRING" id="362976.HQ_1782A"/>
<dbReference type="GeneID" id="4194078"/>
<dbReference type="KEGG" id="hwa:HQ_1782A"/>
<dbReference type="eggNOG" id="arCOG03092">
    <property type="taxonomic scope" value="Archaea"/>
</dbReference>
<dbReference type="HOGENOM" id="CLU_169045_1_0_2"/>
<dbReference type="Proteomes" id="UP000001975">
    <property type="component" value="Chromosome"/>
</dbReference>
<dbReference type="GO" id="GO:0033172">
    <property type="term" value="C:gas vesicle shell"/>
    <property type="evidence" value="ECO:0007669"/>
    <property type="project" value="UniProtKB-UniRule"/>
</dbReference>
<dbReference type="GO" id="GO:0012506">
    <property type="term" value="C:vesicle membrane"/>
    <property type="evidence" value="ECO:0007669"/>
    <property type="project" value="InterPro"/>
</dbReference>
<dbReference type="GO" id="GO:0005198">
    <property type="term" value="F:structural molecule activity"/>
    <property type="evidence" value="ECO:0007669"/>
    <property type="project" value="InterPro"/>
</dbReference>
<dbReference type="HAMAP" id="MF_00576">
    <property type="entry name" value="Gas_vesicle_A"/>
    <property type="match status" value="1"/>
</dbReference>
<dbReference type="InterPro" id="IPR000638">
    <property type="entry name" value="Gas-vesicle_GvpA-like"/>
</dbReference>
<dbReference type="InterPro" id="IPR047870">
    <property type="entry name" value="Gas_vesicle_GvpA"/>
</dbReference>
<dbReference type="InterPro" id="IPR050530">
    <property type="entry name" value="GvpA"/>
</dbReference>
<dbReference type="InterPro" id="IPR018493">
    <property type="entry name" value="GvpA-like_CS"/>
</dbReference>
<dbReference type="NCBIfam" id="NF046092">
    <property type="entry name" value="halo_gas_GvpA"/>
    <property type="match status" value="1"/>
</dbReference>
<dbReference type="NCBIfam" id="NF006874">
    <property type="entry name" value="PRK09371.1"/>
    <property type="match status" value="1"/>
</dbReference>
<dbReference type="PANTHER" id="PTHR35344:SF4">
    <property type="entry name" value="GAS VESICLE PROTEIN A1"/>
    <property type="match status" value="1"/>
</dbReference>
<dbReference type="PANTHER" id="PTHR35344">
    <property type="entry name" value="GAS VESICLE STRUCTURAL PROTEIN 2-RELATED"/>
    <property type="match status" value="1"/>
</dbReference>
<dbReference type="Pfam" id="PF00741">
    <property type="entry name" value="Gas_vesicle"/>
    <property type="match status" value="1"/>
</dbReference>
<dbReference type="PROSITE" id="PS00234">
    <property type="entry name" value="GAS_VESICLE_A_1"/>
    <property type="match status" value="1"/>
</dbReference>
<dbReference type="PROSITE" id="PS00669">
    <property type="entry name" value="GAS_VESICLE_A_2"/>
    <property type="match status" value="1"/>
</dbReference>
<name>GVPA_HALWD</name>
<proteinExistence type="inferred from homology"/>
<keyword id="KW-0304">Gas vesicle</keyword>
<keyword id="KW-1185">Reference proteome</keyword>
<accession>Q18JA1</accession>
<organism>
    <name type="scientific">Haloquadratum walsbyi (strain DSM 16790 / HBSQ001)</name>
    <dbReference type="NCBI Taxonomy" id="362976"/>
    <lineage>
        <taxon>Archaea</taxon>
        <taxon>Methanobacteriati</taxon>
        <taxon>Methanobacteriota</taxon>
        <taxon>Stenosarchaea group</taxon>
        <taxon>Halobacteria</taxon>
        <taxon>Halobacteriales</taxon>
        <taxon>Haloferacaceae</taxon>
        <taxon>Haloquadratum</taxon>
    </lineage>
</organism>
<feature type="chain" id="PRO_1000025106" description="Gas vesicle protein A">
    <location>
        <begin position="1"/>
        <end position="72"/>
    </location>
</feature>
<gene>
    <name evidence="1 3" type="primary">gvpA</name>
    <name type="ordered locus">HQ_1782A</name>
</gene>
<evidence type="ECO:0000255" key="1">
    <source>
        <dbReference type="HAMAP-Rule" id="MF_00576"/>
    </source>
</evidence>
<evidence type="ECO:0000269" key="2">
    <source>
    </source>
</evidence>
<evidence type="ECO:0000303" key="3">
    <source>
    </source>
</evidence>
<protein>
    <recommendedName>
        <fullName evidence="1">Gas vesicle protein A</fullName>
        <shortName evidence="1">GvpA</shortName>
    </recommendedName>
</protein>
<sequence>MAQPDSSSLAEVLDRVLDKGIVVDTFARISLVGIEILTVEARVVVASVDTFLHYAEEIAKIEQAELTAGAEA</sequence>